<comment type="function">
    <text evidence="1">Functions in the N-end rule pathway of protein degradation where it conjugates Leu from its aminoacyl-tRNA to the N-termini of proteins containing an N-terminal aspartate or glutamate.</text>
</comment>
<comment type="catalytic activity">
    <reaction evidence="1">
        <text>N-terminal L-glutamyl-[protein] + L-leucyl-tRNA(Leu) = N-terminal L-leucyl-L-glutamyl-[protein] + tRNA(Leu) + H(+)</text>
        <dbReference type="Rhea" id="RHEA:50412"/>
        <dbReference type="Rhea" id="RHEA-COMP:9613"/>
        <dbReference type="Rhea" id="RHEA-COMP:9622"/>
        <dbReference type="Rhea" id="RHEA-COMP:12664"/>
        <dbReference type="Rhea" id="RHEA-COMP:12668"/>
        <dbReference type="ChEBI" id="CHEBI:15378"/>
        <dbReference type="ChEBI" id="CHEBI:64721"/>
        <dbReference type="ChEBI" id="CHEBI:78442"/>
        <dbReference type="ChEBI" id="CHEBI:78494"/>
        <dbReference type="ChEBI" id="CHEBI:133041"/>
        <dbReference type="EC" id="2.3.2.29"/>
    </reaction>
</comment>
<comment type="catalytic activity">
    <reaction evidence="1">
        <text>N-terminal L-aspartyl-[protein] + L-leucyl-tRNA(Leu) = N-terminal L-leucyl-L-aspartyl-[protein] + tRNA(Leu) + H(+)</text>
        <dbReference type="Rhea" id="RHEA:50420"/>
        <dbReference type="Rhea" id="RHEA-COMP:9613"/>
        <dbReference type="Rhea" id="RHEA-COMP:9622"/>
        <dbReference type="Rhea" id="RHEA-COMP:12669"/>
        <dbReference type="Rhea" id="RHEA-COMP:12674"/>
        <dbReference type="ChEBI" id="CHEBI:15378"/>
        <dbReference type="ChEBI" id="CHEBI:64720"/>
        <dbReference type="ChEBI" id="CHEBI:78442"/>
        <dbReference type="ChEBI" id="CHEBI:78494"/>
        <dbReference type="ChEBI" id="CHEBI:133042"/>
        <dbReference type="EC" id="2.3.2.29"/>
    </reaction>
</comment>
<comment type="subcellular location">
    <subcellularLocation>
        <location evidence="1">Cytoplasm</location>
    </subcellularLocation>
</comment>
<comment type="similarity">
    <text evidence="1">Belongs to the R-transferase family. Bpt subfamily.</text>
</comment>
<sequence length="243" mass="28301">MTKLAQLKLYATRPHPCSYLDDQEATTVFIDPNATIDASLYSELSAYGFRRSGSHVYRPHCEQCQACIPIRVCADSFTPNRSQKRCLKLNADLVVSEHDSIDNEECFSLYERYINERHSDGDMYPADKTQYRDFLTSEWGITRFLLFRDAQQSLLAVAVVDRLENGLSAVYTFFDPDAEKRSLGRFAILYQLEQAKQQQLPYLYLGYWIRACTKMNYKTDYQPYQMLINQNWVNIDVSSVIKR</sequence>
<reference key="1">
    <citation type="journal article" date="2009" name="PLoS ONE">
        <title>The complete genome of Teredinibacter turnerae T7901: an intracellular endosymbiont of marine wood-boring bivalves (shipworms).</title>
        <authorList>
            <person name="Yang J.C."/>
            <person name="Madupu R."/>
            <person name="Durkin A.S."/>
            <person name="Ekborg N.A."/>
            <person name="Pedamallu C.S."/>
            <person name="Hostetler J.B."/>
            <person name="Radune D."/>
            <person name="Toms B.S."/>
            <person name="Henrissat B."/>
            <person name="Coutinho P.M."/>
            <person name="Schwarz S."/>
            <person name="Field L."/>
            <person name="Trindade-Silva A.E."/>
            <person name="Soares C.A.G."/>
            <person name="Elshahawi S."/>
            <person name="Hanora A."/>
            <person name="Schmidt E.W."/>
            <person name="Haygood M.G."/>
            <person name="Posfai J."/>
            <person name="Benner J."/>
            <person name="Madinger C."/>
            <person name="Nove J."/>
            <person name="Anton B."/>
            <person name="Chaudhary K."/>
            <person name="Foster J."/>
            <person name="Holman A."/>
            <person name="Kumar S."/>
            <person name="Lessard P.A."/>
            <person name="Luyten Y.A."/>
            <person name="Slatko B."/>
            <person name="Wood N."/>
            <person name="Wu B."/>
            <person name="Teplitski M."/>
            <person name="Mougous J.D."/>
            <person name="Ward N."/>
            <person name="Eisen J.A."/>
            <person name="Badger J.H."/>
            <person name="Distel D.L."/>
        </authorList>
    </citation>
    <scope>NUCLEOTIDE SEQUENCE [LARGE SCALE GENOMIC DNA]</scope>
    <source>
        <strain>ATCC 39867 / T7901</strain>
    </source>
</reference>
<organism>
    <name type="scientific">Teredinibacter turnerae (strain ATCC 39867 / T7901)</name>
    <dbReference type="NCBI Taxonomy" id="377629"/>
    <lineage>
        <taxon>Bacteria</taxon>
        <taxon>Pseudomonadati</taxon>
        <taxon>Pseudomonadota</taxon>
        <taxon>Gammaproteobacteria</taxon>
        <taxon>Cellvibrionales</taxon>
        <taxon>Cellvibrionaceae</taxon>
        <taxon>Teredinibacter</taxon>
    </lineage>
</organism>
<proteinExistence type="inferred from homology"/>
<keyword id="KW-0012">Acyltransferase</keyword>
<keyword id="KW-0963">Cytoplasm</keyword>
<keyword id="KW-1185">Reference proteome</keyword>
<keyword id="KW-0808">Transferase</keyword>
<accession>C5BIJ7</accession>
<protein>
    <recommendedName>
        <fullName evidence="1">Aspartate/glutamate leucyltransferase</fullName>
        <ecNumber evidence="1">2.3.2.29</ecNumber>
    </recommendedName>
</protein>
<gene>
    <name evidence="1" type="primary">bpt</name>
    <name type="ordered locus">TERTU_1966</name>
</gene>
<evidence type="ECO:0000255" key="1">
    <source>
        <dbReference type="HAMAP-Rule" id="MF_00689"/>
    </source>
</evidence>
<name>BPT_TERTT</name>
<dbReference type="EC" id="2.3.2.29" evidence="1"/>
<dbReference type="EMBL" id="CP001614">
    <property type="protein sequence ID" value="ACR14693.1"/>
    <property type="molecule type" value="Genomic_DNA"/>
</dbReference>
<dbReference type="RefSeq" id="WP_015820807.1">
    <property type="nucleotide sequence ID" value="NC_012997.1"/>
</dbReference>
<dbReference type="SMR" id="C5BIJ7"/>
<dbReference type="STRING" id="377629.TERTU_1966"/>
<dbReference type="KEGG" id="ttu:TERTU_1966"/>
<dbReference type="eggNOG" id="COG2935">
    <property type="taxonomic scope" value="Bacteria"/>
</dbReference>
<dbReference type="HOGENOM" id="CLU_077607_0_0_6"/>
<dbReference type="OrthoDB" id="9782022at2"/>
<dbReference type="Proteomes" id="UP000009080">
    <property type="component" value="Chromosome"/>
</dbReference>
<dbReference type="GO" id="GO:0005737">
    <property type="term" value="C:cytoplasm"/>
    <property type="evidence" value="ECO:0007669"/>
    <property type="project" value="UniProtKB-SubCell"/>
</dbReference>
<dbReference type="GO" id="GO:0004057">
    <property type="term" value="F:arginyl-tRNA--protein transferase activity"/>
    <property type="evidence" value="ECO:0007669"/>
    <property type="project" value="InterPro"/>
</dbReference>
<dbReference type="GO" id="GO:0008914">
    <property type="term" value="F:leucyl-tRNA--protein transferase activity"/>
    <property type="evidence" value="ECO:0007669"/>
    <property type="project" value="UniProtKB-UniRule"/>
</dbReference>
<dbReference type="GO" id="GO:0071596">
    <property type="term" value="P:ubiquitin-dependent protein catabolic process via the N-end rule pathway"/>
    <property type="evidence" value="ECO:0007669"/>
    <property type="project" value="InterPro"/>
</dbReference>
<dbReference type="HAMAP" id="MF_00689">
    <property type="entry name" value="Bpt"/>
    <property type="match status" value="1"/>
</dbReference>
<dbReference type="InterPro" id="IPR016181">
    <property type="entry name" value="Acyl_CoA_acyltransferase"/>
</dbReference>
<dbReference type="InterPro" id="IPR017138">
    <property type="entry name" value="Asp_Glu_LeuTrfase"/>
</dbReference>
<dbReference type="InterPro" id="IPR030700">
    <property type="entry name" value="N-end_Aminoacyl_Trfase"/>
</dbReference>
<dbReference type="InterPro" id="IPR007472">
    <property type="entry name" value="N-end_Aminoacyl_Trfase_C"/>
</dbReference>
<dbReference type="InterPro" id="IPR007471">
    <property type="entry name" value="N-end_Aminoacyl_Trfase_N"/>
</dbReference>
<dbReference type="NCBIfam" id="NF002341">
    <property type="entry name" value="PRK01305.1-1"/>
    <property type="match status" value="1"/>
</dbReference>
<dbReference type="NCBIfam" id="NF002342">
    <property type="entry name" value="PRK01305.1-3"/>
    <property type="match status" value="1"/>
</dbReference>
<dbReference type="NCBIfam" id="NF002345">
    <property type="entry name" value="PRK01305.2-2"/>
    <property type="match status" value="1"/>
</dbReference>
<dbReference type="NCBIfam" id="NF002346">
    <property type="entry name" value="PRK01305.2-3"/>
    <property type="match status" value="1"/>
</dbReference>
<dbReference type="PANTHER" id="PTHR21367">
    <property type="entry name" value="ARGININE-TRNA-PROTEIN TRANSFERASE 1"/>
    <property type="match status" value="1"/>
</dbReference>
<dbReference type="PANTHER" id="PTHR21367:SF1">
    <property type="entry name" value="ARGINYL-TRNA--PROTEIN TRANSFERASE 1"/>
    <property type="match status" value="1"/>
</dbReference>
<dbReference type="Pfam" id="PF04377">
    <property type="entry name" value="ATE_C"/>
    <property type="match status" value="1"/>
</dbReference>
<dbReference type="Pfam" id="PF04376">
    <property type="entry name" value="ATE_N"/>
    <property type="match status" value="1"/>
</dbReference>
<dbReference type="PIRSF" id="PIRSF037208">
    <property type="entry name" value="ATE_pro_prd"/>
    <property type="match status" value="1"/>
</dbReference>
<dbReference type="SUPFAM" id="SSF55729">
    <property type="entry name" value="Acyl-CoA N-acyltransferases (Nat)"/>
    <property type="match status" value="1"/>
</dbReference>
<feature type="chain" id="PRO_1000212576" description="Aspartate/glutamate leucyltransferase">
    <location>
        <begin position="1"/>
        <end position="243"/>
    </location>
</feature>